<reference key="1">
    <citation type="journal article" date="2002" name="Nature">
        <title>The genome sequence of Schizosaccharomyces pombe.</title>
        <authorList>
            <person name="Wood V."/>
            <person name="Gwilliam R."/>
            <person name="Rajandream M.A."/>
            <person name="Lyne M.H."/>
            <person name="Lyne R."/>
            <person name="Stewart A."/>
            <person name="Sgouros J.G."/>
            <person name="Peat N."/>
            <person name="Hayles J."/>
            <person name="Baker S.G."/>
            <person name="Basham D."/>
            <person name="Bowman S."/>
            <person name="Brooks K."/>
            <person name="Brown D."/>
            <person name="Brown S."/>
            <person name="Chillingworth T."/>
            <person name="Churcher C.M."/>
            <person name="Collins M."/>
            <person name="Connor R."/>
            <person name="Cronin A."/>
            <person name="Davis P."/>
            <person name="Feltwell T."/>
            <person name="Fraser A."/>
            <person name="Gentles S."/>
            <person name="Goble A."/>
            <person name="Hamlin N."/>
            <person name="Harris D.E."/>
            <person name="Hidalgo J."/>
            <person name="Hodgson G."/>
            <person name="Holroyd S."/>
            <person name="Hornsby T."/>
            <person name="Howarth S."/>
            <person name="Huckle E.J."/>
            <person name="Hunt S."/>
            <person name="Jagels K."/>
            <person name="James K.D."/>
            <person name="Jones L."/>
            <person name="Jones M."/>
            <person name="Leather S."/>
            <person name="McDonald S."/>
            <person name="McLean J."/>
            <person name="Mooney P."/>
            <person name="Moule S."/>
            <person name="Mungall K.L."/>
            <person name="Murphy L.D."/>
            <person name="Niblett D."/>
            <person name="Odell C."/>
            <person name="Oliver K."/>
            <person name="O'Neil S."/>
            <person name="Pearson D."/>
            <person name="Quail M.A."/>
            <person name="Rabbinowitsch E."/>
            <person name="Rutherford K.M."/>
            <person name="Rutter S."/>
            <person name="Saunders D."/>
            <person name="Seeger K."/>
            <person name="Sharp S."/>
            <person name="Skelton J."/>
            <person name="Simmonds M.N."/>
            <person name="Squares R."/>
            <person name="Squares S."/>
            <person name="Stevens K."/>
            <person name="Taylor K."/>
            <person name="Taylor R.G."/>
            <person name="Tivey A."/>
            <person name="Walsh S.V."/>
            <person name="Warren T."/>
            <person name="Whitehead S."/>
            <person name="Woodward J.R."/>
            <person name="Volckaert G."/>
            <person name="Aert R."/>
            <person name="Robben J."/>
            <person name="Grymonprez B."/>
            <person name="Weltjens I."/>
            <person name="Vanstreels E."/>
            <person name="Rieger M."/>
            <person name="Schaefer M."/>
            <person name="Mueller-Auer S."/>
            <person name="Gabel C."/>
            <person name="Fuchs M."/>
            <person name="Duesterhoeft A."/>
            <person name="Fritzc C."/>
            <person name="Holzer E."/>
            <person name="Moestl D."/>
            <person name="Hilbert H."/>
            <person name="Borzym K."/>
            <person name="Langer I."/>
            <person name="Beck A."/>
            <person name="Lehrach H."/>
            <person name="Reinhardt R."/>
            <person name="Pohl T.M."/>
            <person name="Eger P."/>
            <person name="Zimmermann W."/>
            <person name="Wedler H."/>
            <person name="Wambutt R."/>
            <person name="Purnelle B."/>
            <person name="Goffeau A."/>
            <person name="Cadieu E."/>
            <person name="Dreano S."/>
            <person name="Gloux S."/>
            <person name="Lelaure V."/>
            <person name="Mottier S."/>
            <person name="Galibert F."/>
            <person name="Aves S.J."/>
            <person name="Xiang Z."/>
            <person name="Hunt C."/>
            <person name="Moore K."/>
            <person name="Hurst S.M."/>
            <person name="Lucas M."/>
            <person name="Rochet M."/>
            <person name="Gaillardin C."/>
            <person name="Tallada V.A."/>
            <person name="Garzon A."/>
            <person name="Thode G."/>
            <person name="Daga R.R."/>
            <person name="Cruzado L."/>
            <person name="Jimenez J."/>
            <person name="Sanchez M."/>
            <person name="del Rey F."/>
            <person name="Benito J."/>
            <person name="Dominguez A."/>
            <person name="Revuelta J.L."/>
            <person name="Moreno S."/>
            <person name="Armstrong J."/>
            <person name="Forsburg S.L."/>
            <person name="Cerutti L."/>
            <person name="Lowe T."/>
            <person name="McCombie W.R."/>
            <person name="Paulsen I."/>
            <person name="Potashkin J."/>
            <person name="Shpakovski G.V."/>
            <person name="Ussery D."/>
            <person name="Barrell B.G."/>
            <person name="Nurse P."/>
        </authorList>
    </citation>
    <scope>NUCLEOTIDE SEQUENCE [LARGE SCALE GENOMIC DNA]</scope>
    <source>
        <strain>972 / ATCC 24843</strain>
    </source>
</reference>
<reference key="2">
    <citation type="journal article" date="2006" name="Nat. Biotechnol.">
        <title>ORFeome cloning and global analysis of protein localization in the fission yeast Schizosaccharomyces pombe.</title>
        <authorList>
            <person name="Matsuyama A."/>
            <person name="Arai R."/>
            <person name="Yashiroda Y."/>
            <person name="Shirai A."/>
            <person name="Kamata A."/>
            <person name="Sekido S."/>
            <person name="Kobayashi Y."/>
            <person name="Hashimoto A."/>
            <person name="Hamamoto M."/>
            <person name="Hiraoka Y."/>
            <person name="Horinouchi S."/>
            <person name="Yoshida M."/>
        </authorList>
    </citation>
    <scope>SUBCELLULAR LOCATION [LARGE SCALE ANALYSIS]</scope>
</reference>
<reference key="3">
    <citation type="journal article" date="2008" name="J. Proteome Res.">
        <title>Phosphoproteome analysis of fission yeast.</title>
        <authorList>
            <person name="Wilson-Grady J.T."/>
            <person name="Villen J."/>
            <person name="Gygi S.P."/>
        </authorList>
    </citation>
    <scope>PHOSPHORYLATION [LARGE SCALE ANALYSIS] AT SER-236; SER-237; SER-259; SER-261 AND SER-268</scope>
    <scope>IDENTIFICATION BY MASS SPECTROMETRY</scope>
</reference>
<reference key="4">
    <citation type="journal article" date="2012" name="Curr. Biol.">
        <title>Plasma membrane tethering of the cortical ER necessitates its finely reticulated architecture.</title>
        <authorList>
            <person name="Zhang D."/>
            <person name="Vjestica A."/>
            <person name="Oliferenko S."/>
        </authorList>
    </citation>
    <scope>FUNCTION</scope>
    <scope>DISRUPTION PHENOTYPE</scope>
    <scope>SUBCELLULAR LOCATION</scope>
</reference>
<reference key="5">
    <citation type="journal article" date="2016" name="Curr. Biol.">
        <title>ER-PM Contacts Define Actomyosin Kinetics for Proper Contractile Ring Assembly.</title>
        <authorList>
            <person name="Zhang D."/>
            <person name="Bidone T.C."/>
            <person name="Vavylonis D."/>
        </authorList>
    </citation>
    <scope>FUNCTION</scope>
    <scope>DISRUPTION PHENOTYPE</scope>
</reference>
<reference key="6">
    <citation type="journal article" date="2018" name="Curr. Biol.">
        <title>ER-PM contacts restrict exocytic sites for polarized morphogenesis.</title>
        <authorList>
            <person name="Ng A.Y.E."/>
            <person name="Ng A.Q.E."/>
            <person name="Zhang D."/>
        </authorList>
    </citation>
    <scope>FUNCTION</scope>
    <scope>DISRUPTION PHENOTYPE</scope>
</reference>
<reference key="7">
    <citation type="journal article" date="2020" name="Cell Rep.">
        <title>Plasma membrane furrows control plasticity of ER-PM contacts.</title>
        <authorList>
            <person name="Ng A.Q.E."/>
            <person name="Ng A.Y.E."/>
            <person name="Zhang D."/>
        </authorList>
    </citation>
    <scope>FUNCTION</scope>
    <scope>DISRUPTION PHENOTYPE</scope>
</reference>
<reference key="8">
    <citation type="journal article" date="2020" name="Mol. Cell">
        <title>A UPR-induced soluble ER-phagy receptor acts with VAPs to confer ER stress resistance.</title>
        <authorList>
            <person name="Zhao D."/>
            <person name="Zou C.X."/>
            <person name="Liu X.M."/>
            <person name="Jiang Z.D."/>
            <person name="Yu Z.Q."/>
            <person name="Suo F."/>
            <person name="Du T.Y."/>
            <person name="Dong M.Q."/>
            <person name="He W."/>
            <person name="Du L.L."/>
        </authorList>
    </citation>
    <scope>FUNCTION</scope>
    <scope>INTERACTION WITH EPR1</scope>
</reference>
<reference key="9">
    <citation type="journal article" date="2024" name="J. Cell Sci.">
        <title>Fission yeast Duc1 links to ER-PM contact sites and influences PM lipid composition and cytokinetic ring anchoring.</title>
        <authorList>
            <person name="Willet A.H."/>
            <person name="Park J.S."/>
            <person name="Snider C.E."/>
            <person name="Huang J.J."/>
            <person name="Chen J.S."/>
            <person name="Gould K.L."/>
        </authorList>
    </citation>
    <scope>FUNCTION</scope>
    <scope>INTERACTION WITH DUC1</scope>
    <scope>DISRUPTION PHENOTYPE</scope>
    <scope>MUTAGENESIS OF 39-THR-THR-40</scope>
</reference>
<accession>O60119</accession>
<protein>
    <recommendedName>
        <fullName>Vesicle-associated membrane protein-associated protein scs2</fullName>
        <shortName>VAMP-associated protein scs2</shortName>
    </recommendedName>
    <alternativeName>
        <fullName>VAP homolog 1</fullName>
    </alternativeName>
</protein>
<evidence type="ECO:0000250" key="1">
    <source>
        <dbReference type="UniProtKB" id="P40075"/>
    </source>
</evidence>
<evidence type="ECO:0000255" key="2"/>
<evidence type="ECO:0000255" key="3">
    <source>
        <dbReference type="PROSITE-ProRule" id="PRU00132"/>
    </source>
</evidence>
<evidence type="ECO:0000256" key="4">
    <source>
        <dbReference type="SAM" id="MobiDB-lite"/>
    </source>
</evidence>
<evidence type="ECO:0000269" key="5">
    <source>
    </source>
</evidence>
<evidence type="ECO:0000269" key="6">
    <source>
    </source>
</evidence>
<evidence type="ECO:0000269" key="7">
    <source>
    </source>
</evidence>
<evidence type="ECO:0000269" key="8">
    <source>
    </source>
</evidence>
<evidence type="ECO:0000269" key="9">
    <source>
    </source>
</evidence>
<evidence type="ECO:0000269" key="10">
    <source>
    </source>
</evidence>
<evidence type="ECO:0000269" key="11">
    <source ref="8"/>
</evidence>
<evidence type="ECO:0000305" key="12"/>
<organism>
    <name type="scientific">Schizosaccharomyces pombe (strain 972 / ATCC 24843)</name>
    <name type="common">Fission yeast</name>
    <dbReference type="NCBI Taxonomy" id="284812"/>
    <lineage>
        <taxon>Eukaryota</taxon>
        <taxon>Fungi</taxon>
        <taxon>Dikarya</taxon>
        <taxon>Ascomycota</taxon>
        <taxon>Taphrinomycotina</taxon>
        <taxon>Schizosaccharomycetes</taxon>
        <taxon>Schizosaccharomycetales</taxon>
        <taxon>Schizosaccharomycetaceae</taxon>
        <taxon>Schizosaccharomyces</taxon>
    </lineage>
</organism>
<keyword id="KW-0256">Endoplasmic reticulum</keyword>
<keyword id="KW-0472">Membrane</keyword>
<keyword id="KW-0597">Phosphoprotein</keyword>
<keyword id="KW-1185">Reference proteome</keyword>
<keyword id="KW-0812">Transmembrane</keyword>
<keyword id="KW-1133">Transmembrane helix</keyword>
<gene>
    <name type="primary">scs2</name>
    <name type="ORF">SPBC16G5.05c</name>
</gene>
<proteinExistence type="evidence at protein level"/>
<dbReference type="EMBL" id="CU329671">
    <property type="protein sequence ID" value="CAA19025.1"/>
    <property type="molecule type" value="Genomic_DNA"/>
</dbReference>
<dbReference type="PIR" id="T39597">
    <property type="entry name" value="T39597"/>
</dbReference>
<dbReference type="RefSeq" id="NP_596754.1">
    <property type="nucleotide sequence ID" value="NM_001023774.2"/>
</dbReference>
<dbReference type="SMR" id="O60119"/>
<dbReference type="BioGRID" id="276553">
    <property type="interactions" value="15"/>
</dbReference>
<dbReference type="FunCoup" id="O60119">
    <property type="interactions" value="121"/>
</dbReference>
<dbReference type="STRING" id="284812.O60119"/>
<dbReference type="iPTMnet" id="O60119"/>
<dbReference type="PaxDb" id="4896-SPBC16G5.05c.1"/>
<dbReference type="EnsemblFungi" id="SPBC16G5.05c.1">
    <property type="protein sequence ID" value="SPBC16G5.05c.1:pep"/>
    <property type="gene ID" value="SPBC16G5.05c"/>
</dbReference>
<dbReference type="PomBase" id="SPBC16G5.05c">
    <property type="gene designation" value="scs2"/>
</dbReference>
<dbReference type="VEuPathDB" id="FungiDB:SPBC16G5.05c"/>
<dbReference type="eggNOG" id="KOG0439">
    <property type="taxonomic scope" value="Eukaryota"/>
</dbReference>
<dbReference type="HOGENOM" id="CLU_032848_1_0_1"/>
<dbReference type="InParanoid" id="O60119"/>
<dbReference type="OMA" id="DRKIRCV"/>
<dbReference type="PhylomeDB" id="O60119"/>
<dbReference type="Reactome" id="R-SPO-6798695">
    <property type="pathway name" value="Neutrophil degranulation"/>
</dbReference>
<dbReference type="Reactome" id="R-SPO-9013106">
    <property type="pathway name" value="RHOC GTPase cycle"/>
</dbReference>
<dbReference type="Reactome" id="R-SPO-9609523">
    <property type="pathway name" value="Insertion of tail-anchored proteins into the endoplasmic reticulum membrane"/>
</dbReference>
<dbReference type="PRO" id="PR:O60119"/>
<dbReference type="Proteomes" id="UP000002485">
    <property type="component" value="Chromosome II"/>
</dbReference>
<dbReference type="GO" id="GO:0032541">
    <property type="term" value="C:cortical endoplasmic reticulum"/>
    <property type="evidence" value="ECO:0000314"/>
    <property type="project" value="PomBase"/>
</dbReference>
<dbReference type="GO" id="GO:0160219">
    <property type="term" value="C:cortical endoplasmic reticulum membrane"/>
    <property type="evidence" value="ECO:0000269"/>
    <property type="project" value="PomBase"/>
</dbReference>
<dbReference type="GO" id="GO:0005783">
    <property type="term" value="C:endoplasmic reticulum"/>
    <property type="evidence" value="ECO:0007005"/>
    <property type="project" value="PomBase"/>
</dbReference>
<dbReference type="GO" id="GO:0005789">
    <property type="term" value="C:endoplasmic reticulum membrane"/>
    <property type="evidence" value="ECO:0000318"/>
    <property type="project" value="GO_Central"/>
</dbReference>
<dbReference type="GO" id="GO:0140268">
    <property type="term" value="C:endoplasmic reticulum-plasma membrane contact site"/>
    <property type="evidence" value="ECO:0000269"/>
    <property type="project" value="PomBase"/>
</dbReference>
<dbReference type="GO" id="GO:0005886">
    <property type="term" value="C:plasma membrane"/>
    <property type="evidence" value="ECO:0000318"/>
    <property type="project" value="GO_Central"/>
</dbReference>
<dbReference type="GO" id="GO:0140506">
    <property type="term" value="F:endoplasmic reticulum-autophagosome adaptor activity"/>
    <property type="evidence" value="ECO:0000353"/>
    <property type="project" value="PomBase"/>
</dbReference>
<dbReference type="GO" id="GO:0160214">
    <property type="term" value="F:endoplasmic reticulum-plasma membrane adaptor activity"/>
    <property type="evidence" value="ECO:0000314"/>
    <property type="project" value="PomBase"/>
</dbReference>
<dbReference type="GO" id="GO:0035091">
    <property type="term" value="F:phosphatidylinositol binding"/>
    <property type="evidence" value="ECO:0000269"/>
    <property type="project" value="PomBase"/>
</dbReference>
<dbReference type="GO" id="GO:0001786">
    <property type="term" value="F:phosphatidylserine binding"/>
    <property type="evidence" value="ECO:0000269"/>
    <property type="project" value="PomBase"/>
</dbReference>
<dbReference type="GO" id="GO:0043495">
    <property type="term" value="F:protein-membrane adaptor activity"/>
    <property type="evidence" value="ECO:0000318"/>
    <property type="project" value="GO_Central"/>
</dbReference>
<dbReference type="GO" id="GO:0090158">
    <property type="term" value="P:endoplasmic reticulum membrane organization"/>
    <property type="evidence" value="ECO:0000318"/>
    <property type="project" value="GO_Central"/>
</dbReference>
<dbReference type="GO" id="GO:0061817">
    <property type="term" value="P:endoplasmic reticulum-plasma membrane tethering"/>
    <property type="evidence" value="ECO:0000315"/>
    <property type="project" value="PomBase"/>
</dbReference>
<dbReference type="GO" id="GO:0007163">
    <property type="term" value="P:establishment or maintenance of cell polarity"/>
    <property type="evidence" value="ECO:0000315"/>
    <property type="project" value="PomBase"/>
</dbReference>
<dbReference type="GO" id="GO:0051685">
    <property type="term" value="P:maintenance of ER location"/>
    <property type="evidence" value="ECO:0000315"/>
    <property type="project" value="PomBase"/>
</dbReference>
<dbReference type="GO" id="GO:1902647">
    <property type="term" value="P:negative regulation of 1-phosphatidyl-1D-myo-inositol 4,5-bisphosphate biosynthetic process"/>
    <property type="evidence" value="ECO:0000315"/>
    <property type="project" value="PomBase"/>
</dbReference>
<dbReference type="GO" id="GO:0007009">
    <property type="term" value="P:plasma membrane organization"/>
    <property type="evidence" value="ECO:0000315"/>
    <property type="project" value="PomBase"/>
</dbReference>
<dbReference type="GO" id="GO:0061709">
    <property type="term" value="P:reticulophagy"/>
    <property type="evidence" value="ECO:0000315"/>
    <property type="project" value="PomBase"/>
</dbReference>
<dbReference type="FunFam" id="2.60.40.10:FF:000813">
    <property type="entry name" value="Vesicle-associated protein 1-1"/>
    <property type="match status" value="1"/>
</dbReference>
<dbReference type="Gene3D" id="2.60.40.10">
    <property type="entry name" value="Immunoglobulins"/>
    <property type="match status" value="1"/>
</dbReference>
<dbReference type="InterPro" id="IPR013783">
    <property type="entry name" value="Ig-like_fold"/>
</dbReference>
<dbReference type="InterPro" id="IPR000535">
    <property type="entry name" value="MSP_dom"/>
</dbReference>
<dbReference type="InterPro" id="IPR008962">
    <property type="entry name" value="PapD-like_sf"/>
</dbReference>
<dbReference type="InterPro" id="IPR016763">
    <property type="entry name" value="VAP"/>
</dbReference>
<dbReference type="PANTHER" id="PTHR10809:SF6">
    <property type="entry name" value="AT11025P-RELATED"/>
    <property type="match status" value="1"/>
</dbReference>
<dbReference type="PANTHER" id="PTHR10809">
    <property type="entry name" value="VESICLE-ASSOCIATED MEMBRANE PROTEIN-ASSOCIATED PROTEIN"/>
    <property type="match status" value="1"/>
</dbReference>
<dbReference type="Pfam" id="PF00635">
    <property type="entry name" value="Motile_Sperm"/>
    <property type="match status" value="1"/>
</dbReference>
<dbReference type="SUPFAM" id="SSF49354">
    <property type="entry name" value="PapD-like"/>
    <property type="match status" value="1"/>
</dbReference>
<dbReference type="PROSITE" id="PS50202">
    <property type="entry name" value="MSP"/>
    <property type="match status" value="1"/>
</dbReference>
<feature type="chain" id="PRO_0000314099" description="Vesicle-associated membrane protein-associated protein scs2">
    <location>
        <begin position="1"/>
        <end position="383"/>
    </location>
</feature>
<feature type="topological domain" description="Cytoplasmic" evidence="12">
    <location>
        <begin position="1"/>
        <end position="362"/>
    </location>
</feature>
<feature type="transmembrane region" description="Helical; Anchor for type IV membrane protein" evidence="2">
    <location>
        <begin position="363"/>
        <end position="383"/>
    </location>
</feature>
<feature type="domain" description="MSP" evidence="3">
    <location>
        <begin position="1"/>
        <end position="123"/>
    </location>
</feature>
<feature type="region of interest" description="Disordered" evidence="4">
    <location>
        <begin position="127"/>
        <end position="160"/>
    </location>
</feature>
<feature type="region of interest" description="Disordered" evidence="4">
    <location>
        <begin position="233"/>
        <end position="359"/>
    </location>
</feature>
<feature type="compositionally biased region" description="Polar residues" evidence="4">
    <location>
        <begin position="127"/>
        <end position="146"/>
    </location>
</feature>
<feature type="compositionally biased region" description="Basic and acidic residues" evidence="4">
    <location>
        <begin position="241"/>
        <end position="263"/>
    </location>
</feature>
<feature type="compositionally biased region" description="Basic and acidic residues" evidence="4">
    <location>
        <begin position="289"/>
        <end position="300"/>
    </location>
</feature>
<feature type="compositionally biased region" description="Polar residues" evidence="4">
    <location>
        <begin position="347"/>
        <end position="359"/>
    </location>
</feature>
<feature type="modified residue" description="Phosphoserine" evidence="5">
    <location>
        <position position="236"/>
    </location>
</feature>
<feature type="modified residue" description="Phosphoserine" evidence="5">
    <location>
        <position position="237"/>
    </location>
</feature>
<feature type="modified residue" description="Phosphoserine" evidence="5">
    <location>
        <position position="259"/>
    </location>
</feature>
<feature type="modified residue" description="Phosphoserine" evidence="5">
    <location>
        <position position="261"/>
    </location>
</feature>
<feature type="modified residue" description="Phosphoserine" evidence="5">
    <location>
        <position position="268"/>
    </location>
</feature>
<feature type="mutagenesis site" description="Leads to mislocalization of duc1 to the area of cell division." evidence="10">
    <original>TT</original>
    <variation>AA</variation>
    <location>
        <begin position="39"/>
        <end position="40"/>
    </location>
</feature>
<name>SCS2_SCHPO</name>
<sequence length="383" mass="41235">MSVECSGELFFYPPFTTMSKELISVHNPNPEPVIFKVKTTAPKHYCVRPNSGKIEPKSTVNVQVLLQAMKEEPAPDFKCRDKFLIQSMAIGDADTSNVENYHEFWTEMEKQGRSIFDRKIRCVYSTKQPPQSADKQVENTSTSNPPVSVEGSENLASSVGGPTAVGVSLDEAQNDFNGAKDHLSNGVNTVVPDSTFRSTFESAQIPDASVVQTVVTDADNGAASVKDTIVTAESASSKGADVARSKVQDIIDNEIPKPSESPRRSVSSTPPVHPPPPVPQNLSAVNEEFDTKKNDFDSKLPESTPAVEKVSENLGSETRESLQGAKPAAGAHSSDNALEQIKPSYSADPSSSTGASLTESPGIPPNIVIILCLIFFLIGYLFF</sequence>
<comment type="function">
    <text evidence="6 7 8 9 10 11">Vesicle-associated membrane protein-associated protein (VAP) implicated in maintaining the cortical endoplasmic reticulum (ER)-plasma membrane (PM) attachment (PubMed:23041194, PubMed:26877082, PubMed:29290560, PubMed:32023460). ER-PM contacts function to modulate the distribution of contractile ring components to ensure robust ring assembly (PubMed:26877082). ER-PM contacts function also in controlling exocytosis and maintenance of cell polarity regulating cell shape (PubMed:29290560). VAPs play an important role in regulating eisosome assembly (PubMed:32023460). VAPs also contribute to ER-phagy by tethering atg8 to the ER membrane, but also by maintaining the ER-plasma membrane contact (Ref.8). Restricts the localization of duc1 away from the site of cell division (PubMed:39239853).</text>
</comment>
<comment type="subunit">
    <text evidence="10 11">Interacts (via MSP domain) with duc1 (via FFAT-motif); the interaction is direct and serves to restrict the localization of duc1 to areas of cell membrane-endoplasmic reticulum contact sites, and away from the cell division site (PubMed:39239853). Interacts with epr1 (Ref.8).</text>
</comment>
<comment type="subcellular location">
    <subcellularLocation>
        <location evidence="6">Endoplasmic reticulum membrane</location>
        <topology evidence="2">Single-pass type IV membrane protein</topology>
    </subcellularLocation>
    <text evidence="6">Localizes at the cortical endoplasmic reticulum-plasma membrane contact sites.</text>
</comment>
<comment type="domain">
    <text evidence="1">The MSP domain is required for binding to the FFAT motif of target proteins.</text>
</comment>
<comment type="disruption phenotype">
    <text evidence="6 7 8 9 10">Leads to the dissociation of the cortical endoplasmic reticulum (ER) from the cell periphery and its accumulation in the cytoplasm, in particular in the vicinity of cell tips; when scs22 is also deleted (PubMed:23041194, PubMed:26877082, PubMed:29290560, PubMed:32023460, PubMed:39239853). Affects contractile ring assembly, contractile ring anchoring and displays severe cytokinetic defects; when scs22 is also deleted (PubMed:26877082, PubMed:39239853).</text>
</comment>
<comment type="similarity">
    <text evidence="12">Belongs to the VAMP-associated protein (VAP) (TC 9.B.17) family.</text>
</comment>